<dbReference type="EC" id="1.2.1.38" evidence="1"/>
<dbReference type="EMBL" id="AE004091">
    <property type="protein sequence ID" value="AAG04051.1"/>
    <property type="molecule type" value="Genomic_DNA"/>
</dbReference>
<dbReference type="PIR" id="E83562">
    <property type="entry name" value="E83562"/>
</dbReference>
<dbReference type="RefSeq" id="NP_249353.1">
    <property type="nucleotide sequence ID" value="NC_002516.2"/>
</dbReference>
<dbReference type="RefSeq" id="WP_003113169.1">
    <property type="nucleotide sequence ID" value="NZ_QZGE01000010.1"/>
</dbReference>
<dbReference type="SMR" id="Q9I5Q9"/>
<dbReference type="FunCoup" id="Q9I5Q9">
    <property type="interactions" value="360"/>
</dbReference>
<dbReference type="STRING" id="208964.PA0662"/>
<dbReference type="PaxDb" id="208964-PA0662"/>
<dbReference type="DNASU" id="882004"/>
<dbReference type="GeneID" id="882004"/>
<dbReference type="KEGG" id="pae:PA0662"/>
<dbReference type="PATRIC" id="fig|208964.12.peg.693"/>
<dbReference type="PseudoCAP" id="PA0662"/>
<dbReference type="HOGENOM" id="CLU_006384_0_1_6"/>
<dbReference type="InParanoid" id="Q9I5Q9"/>
<dbReference type="OrthoDB" id="9801289at2"/>
<dbReference type="PhylomeDB" id="Q9I5Q9"/>
<dbReference type="BioCyc" id="PAER208964:G1FZ6-667-MONOMER"/>
<dbReference type="UniPathway" id="UPA00068">
    <property type="reaction ID" value="UER00108"/>
</dbReference>
<dbReference type="Proteomes" id="UP000002438">
    <property type="component" value="Chromosome"/>
</dbReference>
<dbReference type="GO" id="GO:0005737">
    <property type="term" value="C:cytoplasm"/>
    <property type="evidence" value="ECO:0007669"/>
    <property type="project" value="UniProtKB-SubCell"/>
</dbReference>
<dbReference type="GO" id="GO:0003942">
    <property type="term" value="F:N-acetyl-gamma-glutamyl-phosphate reductase activity"/>
    <property type="evidence" value="ECO:0007669"/>
    <property type="project" value="UniProtKB-UniRule"/>
</dbReference>
<dbReference type="GO" id="GO:0051287">
    <property type="term" value="F:NAD binding"/>
    <property type="evidence" value="ECO:0007669"/>
    <property type="project" value="InterPro"/>
</dbReference>
<dbReference type="GO" id="GO:0070401">
    <property type="term" value="F:NADP+ binding"/>
    <property type="evidence" value="ECO:0007669"/>
    <property type="project" value="InterPro"/>
</dbReference>
<dbReference type="GO" id="GO:0006526">
    <property type="term" value="P:L-arginine biosynthetic process"/>
    <property type="evidence" value="ECO:0007669"/>
    <property type="project" value="UniProtKB-UniRule"/>
</dbReference>
<dbReference type="CDD" id="cd23934">
    <property type="entry name" value="AGPR_1_C"/>
    <property type="match status" value="1"/>
</dbReference>
<dbReference type="CDD" id="cd17895">
    <property type="entry name" value="AGPR_1_N"/>
    <property type="match status" value="1"/>
</dbReference>
<dbReference type="FunFam" id="3.30.360.10:FF:000014">
    <property type="entry name" value="N-acetyl-gamma-glutamyl-phosphate reductase"/>
    <property type="match status" value="1"/>
</dbReference>
<dbReference type="Gene3D" id="3.30.360.10">
    <property type="entry name" value="Dihydrodipicolinate Reductase, domain 2"/>
    <property type="match status" value="1"/>
</dbReference>
<dbReference type="Gene3D" id="3.40.50.720">
    <property type="entry name" value="NAD(P)-binding Rossmann-like Domain"/>
    <property type="match status" value="1"/>
</dbReference>
<dbReference type="HAMAP" id="MF_00150">
    <property type="entry name" value="ArgC_type1"/>
    <property type="match status" value="1"/>
</dbReference>
<dbReference type="InterPro" id="IPR023013">
    <property type="entry name" value="AGPR_AS"/>
</dbReference>
<dbReference type="InterPro" id="IPR000706">
    <property type="entry name" value="AGPR_type-1"/>
</dbReference>
<dbReference type="InterPro" id="IPR036291">
    <property type="entry name" value="NAD(P)-bd_dom_sf"/>
</dbReference>
<dbReference type="InterPro" id="IPR050085">
    <property type="entry name" value="NAGSA_dehydrogenase"/>
</dbReference>
<dbReference type="InterPro" id="IPR000534">
    <property type="entry name" value="Semialdehyde_DH_NAD-bd"/>
</dbReference>
<dbReference type="NCBIfam" id="TIGR01850">
    <property type="entry name" value="argC"/>
    <property type="match status" value="1"/>
</dbReference>
<dbReference type="PANTHER" id="PTHR32338:SF10">
    <property type="entry name" value="N-ACETYL-GAMMA-GLUTAMYL-PHOSPHATE REDUCTASE, CHLOROPLASTIC-RELATED"/>
    <property type="match status" value="1"/>
</dbReference>
<dbReference type="PANTHER" id="PTHR32338">
    <property type="entry name" value="N-ACETYL-GAMMA-GLUTAMYL-PHOSPHATE REDUCTASE, CHLOROPLASTIC-RELATED-RELATED"/>
    <property type="match status" value="1"/>
</dbReference>
<dbReference type="Pfam" id="PF01118">
    <property type="entry name" value="Semialdhyde_dh"/>
    <property type="match status" value="1"/>
</dbReference>
<dbReference type="Pfam" id="PF22698">
    <property type="entry name" value="Semialdhyde_dhC_1"/>
    <property type="match status" value="1"/>
</dbReference>
<dbReference type="SMART" id="SM00859">
    <property type="entry name" value="Semialdhyde_dh"/>
    <property type="match status" value="1"/>
</dbReference>
<dbReference type="SUPFAM" id="SSF55347">
    <property type="entry name" value="Glyceraldehyde-3-phosphate dehydrogenase-like, C-terminal domain"/>
    <property type="match status" value="1"/>
</dbReference>
<dbReference type="SUPFAM" id="SSF51735">
    <property type="entry name" value="NAD(P)-binding Rossmann-fold domains"/>
    <property type="match status" value="1"/>
</dbReference>
<dbReference type="PROSITE" id="PS01224">
    <property type="entry name" value="ARGC"/>
    <property type="match status" value="1"/>
</dbReference>
<proteinExistence type="inferred from homology"/>
<accession>Q9I5Q9</accession>
<feature type="chain" id="PRO_0000112437" description="N-acetyl-gamma-glutamyl-phosphate reductase">
    <location>
        <begin position="1"/>
        <end position="344"/>
    </location>
</feature>
<feature type="active site" evidence="1">
    <location>
        <position position="150"/>
    </location>
</feature>
<gene>
    <name evidence="1" type="primary">argC</name>
    <name type="ordered locus">PA0662</name>
</gene>
<keyword id="KW-0028">Amino-acid biosynthesis</keyword>
<keyword id="KW-0055">Arginine biosynthesis</keyword>
<keyword id="KW-0963">Cytoplasm</keyword>
<keyword id="KW-0521">NADP</keyword>
<keyword id="KW-0560">Oxidoreductase</keyword>
<keyword id="KW-1185">Reference proteome</keyword>
<evidence type="ECO:0000255" key="1">
    <source>
        <dbReference type="HAMAP-Rule" id="MF_00150"/>
    </source>
</evidence>
<name>ARGC_PSEAE</name>
<protein>
    <recommendedName>
        <fullName evidence="1">N-acetyl-gamma-glutamyl-phosphate reductase</fullName>
        <shortName evidence="1">AGPR</shortName>
        <ecNumber evidence="1">1.2.1.38</ecNumber>
    </recommendedName>
    <alternativeName>
        <fullName evidence="1">N-acetyl-glutamate semialdehyde dehydrogenase</fullName>
        <shortName evidence="1">NAGSA dehydrogenase</shortName>
    </alternativeName>
</protein>
<sequence>MIKVGIVGGTGYTGVELLRLLAQHPQARVEVITSRSEAGVKVADMYPNLRGHYDDLQFSVPDAQRLGACDVVFFATPHGVAHALAGELLDAGTRVIDLSADFRLADAEEWARWYGQPHGAPALLDEAVYGLPEVNREKIRQARLIAVPGCYPTATQLGLIPLLEAGLADASRLIADCKSGVSGAGRGAKVGSLFCEAGESMMAYAVKGHRHLPEISQGLRRASGGDVGLTFVPHLTPMIRGIHATLYAHVADRSVDLQALFEKRYADEPFVDVMPAGSHPETRSVRGANVCRIAVHRPQGGDLVVVLSVIDNLVKGASGQALQNMNILFGLDERLGLSHAALLP</sequence>
<reference key="1">
    <citation type="journal article" date="2000" name="Nature">
        <title>Complete genome sequence of Pseudomonas aeruginosa PAO1, an opportunistic pathogen.</title>
        <authorList>
            <person name="Stover C.K."/>
            <person name="Pham X.-Q.T."/>
            <person name="Erwin A.L."/>
            <person name="Mizoguchi S.D."/>
            <person name="Warrener P."/>
            <person name="Hickey M.J."/>
            <person name="Brinkman F.S.L."/>
            <person name="Hufnagle W.O."/>
            <person name="Kowalik D.J."/>
            <person name="Lagrou M."/>
            <person name="Garber R.L."/>
            <person name="Goltry L."/>
            <person name="Tolentino E."/>
            <person name="Westbrock-Wadman S."/>
            <person name="Yuan Y."/>
            <person name="Brody L.L."/>
            <person name="Coulter S.N."/>
            <person name="Folger K.R."/>
            <person name="Kas A."/>
            <person name="Larbig K."/>
            <person name="Lim R.M."/>
            <person name="Smith K.A."/>
            <person name="Spencer D.H."/>
            <person name="Wong G.K.-S."/>
            <person name="Wu Z."/>
            <person name="Paulsen I.T."/>
            <person name="Reizer J."/>
            <person name="Saier M.H. Jr."/>
            <person name="Hancock R.E.W."/>
            <person name="Lory S."/>
            <person name="Olson M.V."/>
        </authorList>
    </citation>
    <scope>NUCLEOTIDE SEQUENCE [LARGE SCALE GENOMIC DNA]</scope>
    <source>
        <strain>ATCC 15692 / DSM 22644 / CIP 104116 / JCM 14847 / LMG 12228 / 1C / PRS 101 / PAO1</strain>
    </source>
</reference>
<comment type="function">
    <text evidence="1">Catalyzes the NADPH-dependent reduction of N-acetyl-5-glutamyl phosphate to yield N-acetyl-L-glutamate 5-semialdehyde.</text>
</comment>
<comment type="catalytic activity">
    <reaction evidence="1">
        <text>N-acetyl-L-glutamate 5-semialdehyde + phosphate + NADP(+) = N-acetyl-L-glutamyl 5-phosphate + NADPH + H(+)</text>
        <dbReference type="Rhea" id="RHEA:21588"/>
        <dbReference type="ChEBI" id="CHEBI:15378"/>
        <dbReference type="ChEBI" id="CHEBI:29123"/>
        <dbReference type="ChEBI" id="CHEBI:43474"/>
        <dbReference type="ChEBI" id="CHEBI:57783"/>
        <dbReference type="ChEBI" id="CHEBI:57936"/>
        <dbReference type="ChEBI" id="CHEBI:58349"/>
        <dbReference type="EC" id="1.2.1.38"/>
    </reaction>
</comment>
<comment type="pathway">
    <text evidence="1">Amino-acid biosynthesis; L-arginine biosynthesis; N(2)-acetyl-L-ornithine from L-glutamate: step 3/4.</text>
</comment>
<comment type="subcellular location">
    <subcellularLocation>
        <location evidence="1">Cytoplasm</location>
    </subcellularLocation>
</comment>
<comment type="similarity">
    <text evidence="1">Belongs to the NAGSA dehydrogenase family. Type 1 subfamily.</text>
</comment>
<organism>
    <name type="scientific">Pseudomonas aeruginosa (strain ATCC 15692 / DSM 22644 / CIP 104116 / JCM 14847 / LMG 12228 / 1C / PRS 101 / PAO1)</name>
    <dbReference type="NCBI Taxonomy" id="208964"/>
    <lineage>
        <taxon>Bacteria</taxon>
        <taxon>Pseudomonadati</taxon>
        <taxon>Pseudomonadota</taxon>
        <taxon>Gammaproteobacteria</taxon>
        <taxon>Pseudomonadales</taxon>
        <taxon>Pseudomonadaceae</taxon>
        <taxon>Pseudomonas</taxon>
    </lineage>
</organism>